<organism>
    <name type="scientific">Brassica oleracea var. botrytis</name>
    <name type="common">Cauliflower</name>
    <dbReference type="NCBI Taxonomy" id="3715"/>
    <lineage>
        <taxon>Eukaryota</taxon>
        <taxon>Viridiplantae</taxon>
        <taxon>Streptophyta</taxon>
        <taxon>Embryophyta</taxon>
        <taxon>Tracheophyta</taxon>
        <taxon>Spermatophyta</taxon>
        <taxon>Magnoliopsida</taxon>
        <taxon>eudicotyledons</taxon>
        <taxon>Gunneridae</taxon>
        <taxon>Pentapetalae</taxon>
        <taxon>rosids</taxon>
        <taxon>malvids</taxon>
        <taxon>Brassicales</taxon>
        <taxon>Brassicaceae</taxon>
        <taxon>Brassiceae</taxon>
        <taxon>Brassica</taxon>
    </lineage>
</organism>
<sequence>MAVSSTPWALVALFLMASSTVMAIPPRKAIDVPFGRNYVPTWAFDHQKQLNGGSELQLILDKYTGTGFQSKGSYLFGHFSMHIKLPAGDTAGVVTAFYLSSTNNEHDEIDFEFLGNRTGQPVILQTNVFTGGKGNREQRIYLWFDPSKAYHTYSVLWNLYQIVFFVDNIPIRVFKNAKDLGVRFPFNQPMKLYSSLWNADDWATRGGLEKTNWANAPFIASYRGFHIDGCQASVEAKYCATQGRMWWDQNEFRDLDAEQYRRLKWVRMKWTIYNYCTDRTRFPVMPAECRRDRDV</sequence>
<name>XTH_BRAOB</name>
<accession>Q6YDN9</accession>
<proteinExistence type="evidence at protein level"/>
<gene>
    <name type="primary">XET16A</name>
</gene>
<keyword id="KW-0052">Apoplast</keyword>
<keyword id="KW-0134">Cell wall</keyword>
<keyword id="KW-0961">Cell wall biogenesis/degradation</keyword>
<keyword id="KW-0903">Direct protein sequencing</keyword>
<keyword id="KW-1015">Disulfide bond</keyword>
<keyword id="KW-0325">Glycoprotein</keyword>
<keyword id="KW-0326">Glycosidase</keyword>
<keyword id="KW-0378">Hydrolase</keyword>
<keyword id="KW-0964">Secreted</keyword>
<keyword id="KW-0732">Signal</keyword>
<keyword id="KW-0808">Transferase</keyword>
<dbReference type="EC" id="2.4.1.207"/>
<dbReference type="EMBL" id="AY156708">
    <property type="protein sequence ID" value="AAO00727.1"/>
    <property type="molecule type" value="mRNA"/>
</dbReference>
<dbReference type="SMR" id="Q6YDN9"/>
<dbReference type="CAZy" id="GH16">
    <property type="family name" value="Glycoside Hydrolase Family 16"/>
</dbReference>
<dbReference type="GlyConnect" id="629">
    <property type="glycosylation" value="6 N-Linked glycans"/>
</dbReference>
<dbReference type="GlyCosmos" id="Q6YDN9">
    <property type="glycosylation" value="1 site, 9 glycans"/>
</dbReference>
<dbReference type="iPTMnet" id="Q6YDN9"/>
<dbReference type="BRENDA" id="2.4.1.207">
    <property type="organism ID" value="948"/>
</dbReference>
<dbReference type="GO" id="GO:0048046">
    <property type="term" value="C:apoplast"/>
    <property type="evidence" value="ECO:0007669"/>
    <property type="project" value="UniProtKB-SubCell"/>
</dbReference>
<dbReference type="GO" id="GO:0004553">
    <property type="term" value="F:hydrolase activity, hydrolyzing O-glycosyl compounds"/>
    <property type="evidence" value="ECO:0007669"/>
    <property type="project" value="InterPro"/>
</dbReference>
<dbReference type="GO" id="GO:0030247">
    <property type="term" value="F:polysaccharide binding"/>
    <property type="evidence" value="ECO:0000250"/>
    <property type="project" value="UniProtKB"/>
</dbReference>
<dbReference type="GO" id="GO:0016762">
    <property type="term" value="F:xyloglucan:xyloglucosyl transferase activity"/>
    <property type="evidence" value="ECO:0007669"/>
    <property type="project" value="UniProtKB-EC"/>
</dbReference>
<dbReference type="GO" id="GO:0042546">
    <property type="term" value="P:cell wall biogenesis"/>
    <property type="evidence" value="ECO:0007669"/>
    <property type="project" value="InterPro"/>
</dbReference>
<dbReference type="GO" id="GO:0071555">
    <property type="term" value="P:cell wall organization"/>
    <property type="evidence" value="ECO:0007669"/>
    <property type="project" value="UniProtKB-KW"/>
</dbReference>
<dbReference type="GO" id="GO:0010411">
    <property type="term" value="P:xyloglucan metabolic process"/>
    <property type="evidence" value="ECO:0007669"/>
    <property type="project" value="InterPro"/>
</dbReference>
<dbReference type="CDD" id="cd02176">
    <property type="entry name" value="GH16_XET"/>
    <property type="match status" value="1"/>
</dbReference>
<dbReference type="FunFam" id="2.60.120.200:FF:000025">
    <property type="entry name" value="Xyloglucan endotransglucosylase/hydrolase"/>
    <property type="match status" value="1"/>
</dbReference>
<dbReference type="Gene3D" id="2.60.120.200">
    <property type="match status" value="1"/>
</dbReference>
<dbReference type="InterPro" id="IPR044791">
    <property type="entry name" value="Beta-glucanase/XTH"/>
</dbReference>
<dbReference type="InterPro" id="IPR013320">
    <property type="entry name" value="ConA-like_dom_sf"/>
</dbReference>
<dbReference type="InterPro" id="IPR000757">
    <property type="entry name" value="GH16"/>
</dbReference>
<dbReference type="InterPro" id="IPR008263">
    <property type="entry name" value="GH16_AS"/>
</dbReference>
<dbReference type="InterPro" id="IPR010713">
    <property type="entry name" value="XET_C"/>
</dbReference>
<dbReference type="InterPro" id="IPR016455">
    <property type="entry name" value="XTH"/>
</dbReference>
<dbReference type="PANTHER" id="PTHR31062">
    <property type="entry name" value="XYLOGLUCAN ENDOTRANSGLUCOSYLASE/HYDROLASE PROTEIN 8-RELATED"/>
    <property type="match status" value="1"/>
</dbReference>
<dbReference type="Pfam" id="PF00722">
    <property type="entry name" value="Glyco_hydro_16"/>
    <property type="match status" value="1"/>
</dbReference>
<dbReference type="Pfam" id="PF06955">
    <property type="entry name" value="XET_C"/>
    <property type="match status" value="1"/>
</dbReference>
<dbReference type="PIRSF" id="PIRSF005604">
    <property type="entry name" value="XET"/>
    <property type="match status" value="1"/>
</dbReference>
<dbReference type="SUPFAM" id="SSF49899">
    <property type="entry name" value="Concanavalin A-like lectins/glucanases"/>
    <property type="match status" value="1"/>
</dbReference>
<dbReference type="PROSITE" id="PS01034">
    <property type="entry name" value="GH16_1"/>
    <property type="match status" value="1"/>
</dbReference>
<dbReference type="PROSITE" id="PS51762">
    <property type="entry name" value="GH16_2"/>
    <property type="match status" value="1"/>
</dbReference>
<evidence type="ECO:0000250" key="1"/>
<evidence type="ECO:0000250" key="2">
    <source>
        <dbReference type="UniProtKB" id="Q8GZD5"/>
    </source>
</evidence>
<evidence type="ECO:0000255" key="3">
    <source>
        <dbReference type="PROSITE-ProRule" id="PRU01098"/>
    </source>
</evidence>
<evidence type="ECO:0000255" key="4">
    <source>
        <dbReference type="PROSITE-ProRule" id="PRU10064"/>
    </source>
</evidence>
<evidence type="ECO:0000269" key="5">
    <source>
    </source>
</evidence>
<evidence type="ECO:0000305" key="6"/>
<protein>
    <recommendedName>
        <fullName>Xyloglucan endotransglucosylase/hydrolase</fullName>
        <ecNumber>2.4.1.207</ecNumber>
    </recommendedName>
    <alternativeName>
        <fullName>BobXET16A</fullName>
    </alternativeName>
</protein>
<feature type="signal peptide" evidence="5">
    <location>
        <begin position="1"/>
        <end position="23"/>
    </location>
</feature>
<feature type="chain" id="PRO_0000011834" description="Xyloglucan endotransglucosylase/hydrolase">
    <location>
        <begin position="24"/>
        <end position="295"/>
    </location>
</feature>
<feature type="domain" description="GH16" evidence="3">
    <location>
        <begin position="25"/>
        <end position="222"/>
    </location>
</feature>
<feature type="active site" description="Nucleophile" evidence="4">
    <location>
        <position position="108"/>
    </location>
</feature>
<feature type="active site" description="Proton donor" evidence="4">
    <location>
        <position position="112"/>
    </location>
</feature>
<feature type="binding site" evidence="2">
    <location>
        <position position="112"/>
    </location>
    <ligand>
        <name>xyloglucan</name>
        <dbReference type="ChEBI" id="CHEBI:18233"/>
    </ligand>
</feature>
<feature type="binding site" evidence="2">
    <location>
        <begin position="125"/>
        <end position="127"/>
    </location>
    <ligand>
        <name>xyloglucan</name>
        <dbReference type="ChEBI" id="CHEBI:18233"/>
    </ligand>
</feature>
<feature type="binding site" evidence="2">
    <location>
        <begin position="135"/>
        <end position="137"/>
    </location>
    <ligand>
        <name>xyloglucan</name>
        <dbReference type="ChEBI" id="CHEBI:18233"/>
    </ligand>
</feature>
<feature type="binding site" evidence="2">
    <location>
        <begin position="201"/>
        <end position="202"/>
    </location>
    <ligand>
        <name>xyloglucan</name>
        <dbReference type="ChEBI" id="CHEBI:18233"/>
    </ligand>
</feature>
<feature type="binding site" evidence="2">
    <location>
        <position position="206"/>
    </location>
    <ligand>
        <name>xyloglucan</name>
        <dbReference type="ChEBI" id="CHEBI:18233"/>
    </ligand>
</feature>
<feature type="binding site" evidence="2">
    <location>
        <position position="281"/>
    </location>
    <ligand>
        <name>xyloglucan</name>
        <dbReference type="ChEBI" id="CHEBI:18233"/>
    </ligand>
</feature>
<feature type="site" description="Important for catalytic activity" evidence="2">
    <location>
        <position position="110"/>
    </location>
</feature>
<feature type="glycosylation site" description="N-linked (GlcNAc...) asparagine" evidence="5">
    <location>
        <position position="116"/>
    </location>
</feature>
<feature type="disulfide bond" evidence="2">
    <location>
        <begin position="230"/>
        <end position="239"/>
    </location>
</feature>
<feature type="disulfide bond" evidence="2">
    <location>
        <begin position="276"/>
        <end position="289"/>
    </location>
</feature>
<reference key="1">
    <citation type="journal article" date="2003" name="Biochem. J.">
        <title>N-linked glycosylation of native and recombinant cauliflower xyloglucan endotransglycosylase 16A.</title>
        <authorList>
            <person name="Henriksson H."/>
            <person name="Denman S.E."/>
            <person name="Campuzano I.D.G."/>
            <person name="Ademark P."/>
            <person name="Master E.R."/>
            <person name="Teeri T.T."/>
            <person name="Brumer H. III"/>
        </authorList>
    </citation>
    <scope>NUCLEOTIDE SEQUENCE [MRNA]</scope>
    <scope>PROTEIN SEQUENCE OF 24-38 AND 75-133</scope>
    <scope>MASS SPECTROMETRY</scope>
    <scope>GLYCOSYLATION</scope>
</reference>
<comment type="function">
    <text>Catalyzes xyloglucan endohydrolysis (XEH) and/or endotransglycosylation (XET). Cleaves and religates xyloglucan polymers, an essential constituent of the primary cell wall, and thereby participates in cell wall construction of growing tissues.</text>
</comment>
<comment type="catalytic activity">
    <reaction>
        <text>breaks a beta-(1-&gt;4) bond in the backbone of a xyloglucan and transfers the xyloglucanyl segment on to O-4 of the non-reducing terminal glucose residue of an acceptor, which can be a xyloglucan or an oligosaccharide of xyloglucan.</text>
        <dbReference type="EC" id="2.4.1.207"/>
    </reaction>
</comment>
<comment type="subcellular location">
    <subcellularLocation>
        <location evidence="6">Secreted</location>
        <location evidence="6">Cell wall</location>
    </subcellularLocation>
    <subcellularLocation>
        <location evidence="6">Secreted</location>
        <location evidence="6">Extracellular space</location>
        <location evidence="6">Apoplast</location>
    </subcellularLocation>
</comment>
<comment type="PTM">
    <text evidence="1">Contains at least one intrachain disulfide bond essential for its enzymatic activity.</text>
</comment>
<comment type="PTM">
    <text>The N-glycan consists of an (GlcNAc)2(Hex)6 oligosaccharide; not essential for its enzymatic activity.</text>
</comment>
<comment type="mass spectrometry"/>
<comment type="miscellaneous">
    <text>No hydrolytic activity detected in vitro.</text>
</comment>
<comment type="similarity">
    <text evidence="6">Belongs to the glycosyl hydrolase 16 family. XTH group 1 subfamily.</text>
</comment>